<sequence length="198" mass="21904">MHYPEPISKLIDSFMKLPGIGPKTAVRLAFFVLDMKEDDVLGFAKALVNAKRDLAYCSVCGHITDRDPCYICNDSHRDQSVVCVVQEPKDVIAMEKMKEYQGVYHVLRGAISPMGGIGPEDINIPQLLKRLHDETVQEVILATNPNIEGEATAMYISRLLKPTGIKVTRIAHGLPVGGDLEYADEVTLSKALEGRREV</sequence>
<dbReference type="EMBL" id="CP001215">
    <property type="protein sequence ID" value="ACP12891.1"/>
    <property type="molecule type" value="Genomic_DNA"/>
</dbReference>
<dbReference type="RefSeq" id="WP_000559171.1">
    <property type="nucleotide sequence ID" value="NC_012581.1"/>
</dbReference>
<dbReference type="SMR" id="C3LIZ7"/>
<dbReference type="GeneID" id="45020060"/>
<dbReference type="KEGG" id="bah:BAMEG_0028"/>
<dbReference type="HOGENOM" id="CLU_060739_1_0_9"/>
<dbReference type="GO" id="GO:0003677">
    <property type="term" value="F:DNA binding"/>
    <property type="evidence" value="ECO:0007669"/>
    <property type="project" value="UniProtKB-UniRule"/>
</dbReference>
<dbReference type="GO" id="GO:0008270">
    <property type="term" value="F:zinc ion binding"/>
    <property type="evidence" value="ECO:0007669"/>
    <property type="project" value="UniProtKB-KW"/>
</dbReference>
<dbReference type="GO" id="GO:0006310">
    <property type="term" value="P:DNA recombination"/>
    <property type="evidence" value="ECO:0007669"/>
    <property type="project" value="UniProtKB-UniRule"/>
</dbReference>
<dbReference type="GO" id="GO:0006281">
    <property type="term" value="P:DNA repair"/>
    <property type="evidence" value="ECO:0007669"/>
    <property type="project" value="UniProtKB-UniRule"/>
</dbReference>
<dbReference type="CDD" id="cd01025">
    <property type="entry name" value="TOPRIM_recR"/>
    <property type="match status" value="1"/>
</dbReference>
<dbReference type="Gene3D" id="3.30.60.80">
    <property type="match status" value="1"/>
</dbReference>
<dbReference type="Gene3D" id="3.40.1360.10">
    <property type="match status" value="1"/>
</dbReference>
<dbReference type="Gene3D" id="6.10.250.240">
    <property type="match status" value="1"/>
</dbReference>
<dbReference type="Gene3D" id="1.10.8.420">
    <property type="entry name" value="RecR Domain 1"/>
    <property type="match status" value="1"/>
</dbReference>
<dbReference type="HAMAP" id="MF_00017">
    <property type="entry name" value="RecR"/>
    <property type="match status" value="1"/>
</dbReference>
<dbReference type="InterPro" id="IPR000093">
    <property type="entry name" value="DNA_Rcmb_RecR"/>
</dbReference>
<dbReference type="InterPro" id="IPR023627">
    <property type="entry name" value="Rcmb_RecR"/>
</dbReference>
<dbReference type="InterPro" id="IPR015967">
    <property type="entry name" value="Rcmb_RecR_Znf"/>
</dbReference>
<dbReference type="InterPro" id="IPR006171">
    <property type="entry name" value="TOPRIM_dom"/>
</dbReference>
<dbReference type="InterPro" id="IPR034137">
    <property type="entry name" value="TOPRIM_RecR"/>
</dbReference>
<dbReference type="NCBIfam" id="TIGR00615">
    <property type="entry name" value="recR"/>
    <property type="match status" value="1"/>
</dbReference>
<dbReference type="PANTHER" id="PTHR30446">
    <property type="entry name" value="RECOMBINATION PROTEIN RECR"/>
    <property type="match status" value="1"/>
</dbReference>
<dbReference type="PANTHER" id="PTHR30446:SF0">
    <property type="entry name" value="RECOMBINATION PROTEIN RECR"/>
    <property type="match status" value="1"/>
</dbReference>
<dbReference type="Pfam" id="PF21175">
    <property type="entry name" value="RecR_C"/>
    <property type="match status" value="1"/>
</dbReference>
<dbReference type="Pfam" id="PF21176">
    <property type="entry name" value="RecR_HhH"/>
    <property type="match status" value="1"/>
</dbReference>
<dbReference type="Pfam" id="PF02132">
    <property type="entry name" value="RecR_ZnF"/>
    <property type="match status" value="1"/>
</dbReference>
<dbReference type="Pfam" id="PF13662">
    <property type="entry name" value="Toprim_4"/>
    <property type="match status" value="1"/>
</dbReference>
<dbReference type="SMART" id="SM00493">
    <property type="entry name" value="TOPRIM"/>
    <property type="match status" value="1"/>
</dbReference>
<dbReference type="SUPFAM" id="SSF111304">
    <property type="entry name" value="Recombination protein RecR"/>
    <property type="match status" value="1"/>
</dbReference>
<dbReference type="PROSITE" id="PS01300">
    <property type="entry name" value="RECR"/>
    <property type="match status" value="1"/>
</dbReference>
<dbReference type="PROSITE" id="PS50880">
    <property type="entry name" value="TOPRIM"/>
    <property type="match status" value="1"/>
</dbReference>
<evidence type="ECO:0000255" key="1">
    <source>
        <dbReference type="HAMAP-Rule" id="MF_00017"/>
    </source>
</evidence>
<comment type="function">
    <text evidence="1">May play a role in DNA repair. It seems to be involved in an RecBC-independent recombinational process of DNA repair. It may act with RecF and RecO.</text>
</comment>
<comment type="similarity">
    <text evidence="1">Belongs to the RecR family.</text>
</comment>
<proteinExistence type="inferred from homology"/>
<feature type="chain" id="PRO_1000116672" description="Recombination protein RecR">
    <location>
        <begin position="1"/>
        <end position="198"/>
    </location>
</feature>
<feature type="domain" description="Toprim" evidence="1">
    <location>
        <begin position="80"/>
        <end position="175"/>
    </location>
</feature>
<feature type="zinc finger region" description="C4-type" evidence="1">
    <location>
        <begin position="57"/>
        <end position="72"/>
    </location>
</feature>
<gene>
    <name evidence="1" type="primary">recR</name>
    <name type="ordered locus">BAMEG_0028</name>
</gene>
<accession>C3LIZ7</accession>
<organism>
    <name type="scientific">Bacillus anthracis (strain CDC 684 / NRRL 3495)</name>
    <dbReference type="NCBI Taxonomy" id="568206"/>
    <lineage>
        <taxon>Bacteria</taxon>
        <taxon>Bacillati</taxon>
        <taxon>Bacillota</taxon>
        <taxon>Bacilli</taxon>
        <taxon>Bacillales</taxon>
        <taxon>Bacillaceae</taxon>
        <taxon>Bacillus</taxon>
        <taxon>Bacillus cereus group</taxon>
    </lineage>
</organism>
<keyword id="KW-0227">DNA damage</keyword>
<keyword id="KW-0233">DNA recombination</keyword>
<keyword id="KW-0234">DNA repair</keyword>
<keyword id="KW-0479">Metal-binding</keyword>
<keyword id="KW-0862">Zinc</keyword>
<keyword id="KW-0863">Zinc-finger</keyword>
<protein>
    <recommendedName>
        <fullName evidence="1">Recombination protein RecR</fullName>
    </recommendedName>
</protein>
<name>RECR_BACAC</name>
<reference key="1">
    <citation type="submission" date="2008-10" db="EMBL/GenBank/DDBJ databases">
        <title>Genome sequence of Bacillus anthracis str. CDC 684.</title>
        <authorList>
            <person name="Dodson R.J."/>
            <person name="Munk A.C."/>
            <person name="Brettin T."/>
            <person name="Bruce D."/>
            <person name="Detter C."/>
            <person name="Tapia R."/>
            <person name="Han C."/>
            <person name="Sutton G."/>
            <person name="Sims D."/>
        </authorList>
    </citation>
    <scope>NUCLEOTIDE SEQUENCE [LARGE SCALE GENOMIC DNA]</scope>
    <source>
        <strain>CDC 684 / NRRL 3495</strain>
    </source>
</reference>